<protein>
    <recommendedName>
        <fullName>E3 ubiquitin-protein ligase Smurf1</fullName>
        <ecNumber evidence="1">2.3.2.26</ecNumber>
    </recommendedName>
    <alternativeName>
        <fullName>HECT-type E3 ubiquitin transferase Smurf1</fullName>
    </alternativeName>
    <alternativeName>
        <fullName>Lethal with a checkpoint kinase protein</fullName>
    </alternativeName>
    <alternativeName>
        <fullName>SMAD ubiquitination regulatory factor 1 homolog</fullName>
        <shortName>DSmurf</shortName>
    </alternativeName>
</protein>
<sequence length="1061" mass="115676">MNKLDYPRRNGTHKVRITILCARNLARKDLFRLPDPFAKVQVDGTGQVYSTEISKSSLDPKWNAHYDLFLGIGDAITITVWNQRKIHKGSGFLGCVRIPAFNIQSLKGAGFQRLDLGKLSPDDDELVRGQIIISLLSKDGPSSGNPLAIVGPSGDVRGPSEDDSSEDSLPEGWEERRTDNGRVYYVNHATKSTQWDRPRQPGVVGSSHATSPQQRHNTHNGNSGDRQAPAGPTRSTTCTNLMNNGHRSRDLSVTASDERRHSTEILSSVGKENTSPTTPVSATTTPGKKTSSSNSSSAGGRTLEQRPTNEPATPTSSTTSASVRLHSNDNHVKTPKHQTNGHAPPESTPTSPTGQQNYVNGNAQNGSTSGNGSGQAAQPQSASNGWTQEDAATTTSPSTTTSPPRHSQSPPTPNISPPASVTPSANGNVHSPNANSTPAGSGGGSRSYTAATPGQRSQRRSSRQQGEESSTRRRSSRGTRNGGTSGGGGGGGSGQRYASAAIAAANQAARPFLDLPPGYEMRTTQQGQVYFYHIPTGVSTWHDPRIPRDFDTQHLTLDAIGPLPSGWEQRKTASGRVYFVDHNNRTTQFTDPRLSGSILQMIRRGTVPPTSAANAGTPAPPSATPATPSAAAAVPPQATPASNATPTTLTTTTNPPHRIVPDLPQGLLEGADLLPKYRRDLVGKLRALRTELQTMQPQSGHCRLEVSRNEIFEESYRLIMKMRAKDMRKRLMVKFKGEEGLDYGGVAREWLHLLSREMLNPQYGLFQYSRDDHYTLQINPDSGVNPDHLSYFHFVGRTLGIAVFHGHCLDGGFTTPFYKQLLNKPITLGDIEGVDPDLHRSLTWMLESNISGIIESTFSVENNSFGALVVHELKPGGASIPVTEENKREYVKLYVNYRFMRGIEQQFLALQKGFCELIPSHLLRPFDERELELVIGGISSIDVNDWRNNTRLKHCTNETTQVLWFWQVVESYSSEMRARLLQFVTGSSRVPLQGFRALQGSTGAVGPRLFTIHLTADVPTQNLPKAHTCFNRIDLPPYETYQLLCDKLTQAVEETCGFAVE</sequence>
<feature type="chain" id="PRO_0000120330" description="E3 ubiquitin-protein ligase Smurf1">
    <location>
        <begin position="1"/>
        <end position="1061"/>
    </location>
</feature>
<feature type="domain" description="C2" evidence="2">
    <location>
        <begin position="1"/>
        <end position="116"/>
    </location>
</feature>
<feature type="domain" description="WW 1" evidence="4">
    <location>
        <begin position="167"/>
        <end position="200"/>
    </location>
</feature>
<feature type="domain" description="WW 2" evidence="4">
    <location>
        <begin position="513"/>
        <end position="546"/>
    </location>
</feature>
<feature type="domain" description="WW 3" evidence="4">
    <location>
        <begin position="561"/>
        <end position="594"/>
    </location>
</feature>
<feature type="domain" description="HECT" evidence="3">
    <location>
        <begin position="723"/>
        <end position="1061"/>
    </location>
</feature>
<feature type="region of interest" description="Disordered" evidence="5">
    <location>
        <begin position="143"/>
        <end position="176"/>
    </location>
</feature>
<feature type="region of interest" description="Disordered" evidence="5">
    <location>
        <begin position="188"/>
        <end position="496"/>
    </location>
</feature>
<feature type="region of interest" description="Interaction with MAD">
    <location>
        <begin position="513"/>
        <end position="602"/>
    </location>
</feature>
<feature type="region of interest" description="Disordered" evidence="5">
    <location>
        <begin position="608"/>
        <end position="661"/>
    </location>
</feature>
<feature type="compositionally biased region" description="Polar residues" evidence="5">
    <location>
        <begin position="207"/>
        <end position="225"/>
    </location>
</feature>
<feature type="compositionally biased region" description="Polar residues" evidence="5">
    <location>
        <begin position="233"/>
        <end position="255"/>
    </location>
</feature>
<feature type="compositionally biased region" description="Polar residues" evidence="5">
    <location>
        <begin position="264"/>
        <end position="273"/>
    </location>
</feature>
<feature type="compositionally biased region" description="Low complexity" evidence="5">
    <location>
        <begin position="274"/>
        <end position="300"/>
    </location>
</feature>
<feature type="compositionally biased region" description="Low complexity" evidence="5">
    <location>
        <begin position="311"/>
        <end position="322"/>
    </location>
</feature>
<feature type="compositionally biased region" description="Polar residues" evidence="5">
    <location>
        <begin position="348"/>
        <end position="359"/>
    </location>
</feature>
<feature type="compositionally biased region" description="Low complexity" evidence="5">
    <location>
        <begin position="360"/>
        <end position="378"/>
    </location>
</feature>
<feature type="compositionally biased region" description="Polar residues" evidence="5">
    <location>
        <begin position="379"/>
        <end position="392"/>
    </location>
</feature>
<feature type="compositionally biased region" description="Low complexity" evidence="5">
    <location>
        <begin position="393"/>
        <end position="409"/>
    </location>
</feature>
<feature type="compositionally biased region" description="Polar residues" evidence="5">
    <location>
        <begin position="417"/>
        <end position="439"/>
    </location>
</feature>
<feature type="compositionally biased region" description="Gly residues" evidence="5">
    <location>
        <begin position="480"/>
        <end position="494"/>
    </location>
</feature>
<feature type="compositionally biased region" description="Low complexity" evidence="5">
    <location>
        <begin position="608"/>
        <end position="617"/>
    </location>
</feature>
<feature type="compositionally biased region" description="Low complexity" evidence="5">
    <location>
        <begin position="624"/>
        <end position="656"/>
    </location>
</feature>
<feature type="active site" description="Glycyl thioester intermediate">
    <location>
        <position position="1029"/>
    </location>
</feature>
<feature type="modified residue" description="Phosphoserine" evidence="8">
    <location>
        <position position="262"/>
    </location>
</feature>
<feature type="modified residue" description="Phosphothreonine" evidence="8">
    <location>
        <position position="412"/>
    </location>
</feature>
<feature type="modified residue" description="Phosphoserine" evidence="8">
    <location>
        <position position="416"/>
    </location>
</feature>
<feature type="mutagenesis site" description="Abolishes interaction with MAD; when associated with A-544." evidence="7">
    <original>W</original>
    <variation>F</variation>
    <location>
        <position position="541"/>
    </location>
</feature>
<feature type="mutagenesis site" description="Abolishes interaction with MAD; when associated with F-541." evidence="7">
    <original>P</original>
    <variation>A</variation>
    <location>
        <position position="544"/>
    </location>
</feature>
<feature type="mutagenesis site" description="Abolishes enzymatic activity; no change in interaction with MAD." evidence="7">
    <original>C</original>
    <variation>A</variation>
    <location>
        <position position="1029"/>
    </location>
</feature>
<proteinExistence type="evidence at protein level"/>
<organism>
    <name type="scientific">Drosophila melanogaster</name>
    <name type="common">Fruit fly</name>
    <dbReference type="NCBI Taxonomy" id="7227"/>
    <lineage>
        <taxon>Eukaryota</taxon>
        <taxon>Metazoa</taxon>
        <taxon>Ecdysozoa</taxon>
        <taxon>Arthropoda</taxon>
        <taxon>Hexapoda</taxon>
        <taxon>Insecta</taxon>
        <taxon>Pterygota</taxon>
        <taxon>Neoptera</taxon>
        <taxon>Endopterygota</taxon>
        <taxon>Diptera</taxon>
        <taxon>Brachycera</taxon>
        <taxon>Muscomorpha</taxon>
        <taxon>Ephydroidea</taxon>
        <taxon>Drosophilidae</taxon>
        <taxon>Drosophila</taxon>
        <taxon>Sophophora</taxon>
    </lineage>
</organism>
<accession>Q9V853</accession>
<accession>Q9U3W2</accession>
<gene>
    <name evidence="9" type="primary">Smurf</name>
    <name type="synonym">lack</name>
    <name type="synonym">Smurf1</name>
    <name evidence="10" type="ORF">CG4943</name>
</gene>
<keyword id="KW-0217">Developmental protein</keyword>
<keyword id="KW-0597">Phosphoprotein</keyword>
<keyword id="KW-1185">Reference proteome</keyword>
<keyword id="KW-0677">Repeat</keyword>
<keyword id="KW-0808">Transferase</keyword>
<keyword id="KW-0833">Ubl conjugation pathway</keyword>
<comment type="function">
    <text evidence="6 7">E3 ubiquitin-protein ligase which accepts ubiquitin from an E2 ubiquitin-conjugating enzyme in the form of a thioester and then directly transfers the ubiquitin to targeted substrates. Down-regulates Dpp signaling after gastrulation by promoting MAD ubiquitination and subsequent degradation.</text>
</comment>
<comment type="catalytic activity">
    <reaction evidence="1">
        <text>S-ubiquitinyl-[E2 ubiquitin-conjugating enzyme]-L-cysteine + [acceptor protein]-L-lysine = [E2 ubiquitin-conjugating enzyme]-L-cysteine + N(6)-ubiquitinyl-[acceptor protein]-L-lysine.</text>
        <dbReference type="EC" id="2.3.2.26"/>
    </reaction>
</comment>
<comment type="pathway">
    <text>Protein modification; protein ubiquitination.</text>
</comment>
<comment type="subunit">
    <text evidence="6 7">Interacts with phosphorylated MAD.</text>
</comment>
<comment type="interaction">
    <interactant intactId="EBI-133520">
        <id>Q9V853</id>
    </interactant>
    <interactant intactId="EBI-165536">
        <id>P23647</id>
        <label>fu</label>
    </interactant>
    <organismsDiffer>false</organismsDiffer>
    <experiments>5</experiments>
</comment>
<comment type="interaction">
    <interactant intactId="EBI-133520">
        <id>Q9V853</id>
    </interactant>
    <interactant intactId="EBI-3401975">
        <id>Q95SI0</id>
        <label>tkv</label>
    </interactant>
    <organismsDiffer>false</organismsDiffer>
    <experiments>2</experiments>
</comment>
<comment type="developmental stage">
    <text evidence="6">Uniformly expressed at blastoderm stage. Weakly but broadly expressed at later stages of embryogenesis.</text>
</comment>
<comment type="disruption phenotype">
    <text evidence="6">Flies exhibit lethal defects in hindgut morphogenesis.</text>
</comment>
<dbReference type="EC" id="2.3.2.26" evidence="1"/>
<dbReference type="EMBL" id="AF416571">
    <property type="protein sequence ID" value="AAL09691.1"/>
    <property type="molecule type" value="mRNA"/>
</dbReference>
<dbReference type="EMBL" id="AF464851">
    <property type="protein sequence ID" value="AAM09646.1"/>
    <property type="molecule type" value="mRNA"/>
</dbReference>
<dbReference type="EMBL" id="AF216521">
    <property type="protein sequence ID" value="AAF21125.1"/>
    <property type="molecule type" value="mRNA"/>
</dbReference>
<dbReference type="EMBL" id="AE013599">
    <property type="protein sequence ID" value="AAF57824.3"/>
    <property type="molecule type" value="Genomic_DNA"/>
</dbReference>
<dbReference type="EMBL" id="BT021410">
    <property type="protein sequence ID" value="AAX33558.1"/>
    <property type="molecule type" value="mRNA"/>
</dbReference>
<dbReference type="RefSeq" id="NP_001261061.1">
    <property type="nucleotide sequence ID" value="NM_001274132.1"/>
</dbReference>
<dbReference type="RefSeq" id="NP_523779.1">
    <property type="nucleotide sequence ID" value="NM_079055.3"/>
</dbReference>
<dbReference type="SMR" id="Q9V853"/>
<dbReference type="BioGRID" id="62687">
    <property type="interactions" value="17"/>
</dbReference>
<dbReference type="ComplexPortal" id="CPX-1897">
    <property type="entry name" value="Fused-Smurf ubiquitin ligase complex"/>
</dbReference>
<dbReference type="FunCoup" id="Q9V853">
    <property type="interactions" value="1176"/>
</dbReference>
<dbReference type="IntAct" id="Q9V853">
    <property type="interactions" value="16"/>
</dbReference>
<dbReference type="STRING" id="7227.FBpp0305371"/>
<dbReference type="GlyGen" id="Q9V853">
    <property type="glycosylation" value="8 sites"/>
</dbReference>
<dbReference type="iPTMnet" id="Q9V853"/>
<dbReference type="PaxDb" id="7227-FBpp0305371"/>
<dbReference type="EnsemblMetazoa" id="FBtr0086833">
    <property type="protein sequence ID" value="FBpp0086011"/>
    <property type="gene ID" value="FBgn0029006"/>
</dbReference>
<dbReference type="EnsemblMetazoa" id="FBtr0333168">
    <property type="protein sequence ID" value="FBpp0305371"/>
    <property type="gene ID" value="FBgn0029006"/>
</dbReference>
<dbReference type="GeneID" id="36999"/>
<dbReference type="KEGG" id="dme:Dmel_CG4943"/>
<dbReference type="AGR" id="FB:FBgn0029006"/>
<dbReference type="CTD" id="36999"/>
<dbReference type="FlyBase" id="FBgn0029006">
    <property type="gene designation" value="Smurf"/>
</dbReference>
<dbReference type="VEuPathDB" id="VectorBase:FBgn0029006"/>
<dbReference type="eggNOG" id="KOG0940">
    <property type="taxonomic scope" value="Eukaryota"/>
</dbReference>
<dbReference type="GeneTree" id="ENSGT00940000155563"/>
<dbReference type="HOGENOM" id="CLU_002173_1_1_1"/>
<dbReference type="InParanoid" id="Q9V853"/>
<dbReference type="OMA" id="QWDRPRH"/>
<dbReference type="OrthoDB" id="423283at2759"/>
<dbReference type="PhylomeDB" id="Q9V853"/>
<dbReference type="Reactome" id="R-DME-201451">
    <property type="pathway name" value="Signaling by BMP"/>
</dbReference>
<dbReference type="Reactome" id="R-DME-2173788">
    <property type="pathway name" value="Downregulation of TGF-beta receptor signaling"/>
</dbReference>
<dbReference type="Reactome" id="R-DME-2173791">
    <property type="pathway name" value="TGF-beta receptor signaling in EMT (epithelial to mesenchymal transition)"/>
</dbReference>
<dbReference type="Reactome" id="R-DME-2173795">
    <property type="pathway name" value="Downregulation of SMAD2/3:SMAD4 transcriptional activity"/>
</dbReference>
<dbReference type="Reactome" id="R-DME-4608870">
    <property type="pathway name" value="Asymmetric localization of PCP proteins"/>
</dbReference>
<dbReference type="Reactome" id="R-DME-4641257">
    <property type="pathway name" value="Degradation of AXIN"/>
</dbReference>
<dbReference type="Reactome" id="R-DME-5632684">
    <property type="pathway name" value="Hedgehog 'on' state"/>
</dbReference>
<dbReference type="Reactome" id="R-DME-5689880">
    <property type="pathway name" value="Ub-specific processing proteases"/>
</dbReference>
<dbReference type="Reactome" id="R-DME-8941858">
    <property type="pathway name" value="Regulation of RUNX3 expression and activity"/>
</dbReference>
<dbReference type="Reactome" id="R-DME-983168">
    <property type="pathway name" value="Antigen processing: Ubiquitination &amp; Proteasome degradation"/>
</dbReference>
<dbReference type="SignaLink" id="Q9V853"/>
<dbReference type="UniPathway" id="UPA00143"/>
<dbReference type="BioGRID-ORCS" id="36999">
    <property type="hits" value="0 hits in 3 CRISPR screens"/>
</dbReference>
<dbReference type="ChiTaRS" id="Smurf">
    <property type="organism name" value="fly"/>
</dbReference>
<dbReference type="GenomeRNAi" id="36999"/>
<dbReference type="PRO" id="PR:Q9V853"/>
<dbReference type="Proteomes" id="UP000000803">
    <property type="component" value="Chromosome 2R"/>
</dbReference>
<dbReference type="Bgee" id="FBgn0029006">
    <property type="expression patterns" value="Expressed in adult tracheocyte (Drosophila) in open tracheal system trachea and 221 other cell types or tissues"/>
</dbReference>
<dbReference type="ExpressionAtlas" id="Q9V853">
    <property type="expression patterns" value="baseline and differential"/>
</dbReference>
<dbReference type="GO" id="GO:0005737">
    <property type="term" value="C:cytoplasm"/>
    <property type="evidence" value="ECO:0000318"/>
    <property type="project" value="GO_Central"/>
</dbReference>
<dbReference type="GO" id="GO:0005829">
    <property type="term" value="C:cytosol"/>
    <property type="evidence" value="ECO:0000314"/>
    <property type="project" value="FlyBase"/>
</dbReference>
<dbReference type="GO" id="GO:0000151">
    <property type="term" value="C:ubiquitin ligase complex"/>
    <property type="evidence" value="ECO:0000250"/>
    <property type="project" value="UniProtKB"/>
</dbReference>
<dbReference type="GO" id="GO:0061630">
    <property type="term" value="F:ubiquitin protein ligase activity"/>
    <property type="evidence" value="ECO:0000314"/>
    <property type="project" value="FlyBase"/>
</dbReference>
<dbReference type="GO" id="GO:0004842">
    <property type="term" value="F:ubiquitin-protein transferase activity"/>
    <property type="evidence" value="ECO:0000250"/>
    <property type="project" value="UniProtKB"/>
</dbReference>
<dbReference type="GO" id="GO:0001700">
    <property type="term" value="P:embryonic development via the syncytial blastoderm"/>
    <property type="evidence" value="ECO:0000315"/>
    <property type="project" value="UniProtKB"/>
</dbReference>
<dbReference type="GO" id="GO:0048619">
    <property type="term" value="P:embryonic hindgut morphogenesis"/>
    <property type="evidence" value="ECO:0000315"/>
    <property type="project" value="UniProtKB"/>
</dbReference>
<dbReference type="GO" id="GO:0007293">
    <property type="term" value="P:germarium-derived egg chamber formation"/>
    <property type="evidence" value="ECO:0000316"/>
    <property type="project" value="FlyBase"/>
</dbReference>
<dbReference type="GO" id="GO:0048232">
    <property type="term" value="P:male gamete generation"/>
    <property type="evidence" value="ECO:0000315"/>
    <property type="project" value="FlyBase"/>
</dbReference>
<dbReference type="GO" id="GO:0030514">
    <property type="term" value="P:negative regulation of BMP signaling pathway"/>
    <property type="evidence" value="ECO:0000315"/>
    <property type="project" value="UniProtKB"/>
</dbReference>
<dbReference type="GO" id="GO:0035331">
    <property type="term" value="P:negative regulation of hippo signaling"/>
    <property type="evidence" value="ECO:0000316"/>
    <property type="project" value="FlyBase"/>
</dbReference>
<dbReference type="GO" id="GO:0045879">
    <property type="term" value="P:negative regulation of smoothened signaling pathway"/>
    <property type="evidence" value="ECO:0000315"/>
    <property type="project" value="FlyBase"/>
</dbReference>
<dbReference type="GO" id="GO:0048260">
    <property type="term" value="P:positive regulation of receptor-mediated endocytosis"/>
    <property type="evidence" value="ECO:0000315"/>
    <property type="project" value="FlyBase"/>
</dbReference>
<dbReference type="GO" id="GO:0045880">
    <property type="term" value="P:positive regulation of smoothened signaling pathway"/>
    <property type="evidence" value="ECO:0000315"/>
    <property type="project" value="FlyBase"/>
</dbReference>
<dbReference type="GO" id="GO:0043161">
    <property type="term" value="P:proteasome-mediated ubiquitin-dependent protein catabolic process"/>
    <property type="evidence" value="ECO:0000318"/>
    <property type="project" value="GO_Central"/>
</dbReference>
<dbReference type="GO" id="GO:0016567">
    <property type="term" value="P:protein ubiquitination"/>
    <property type="evidence" value="ECO:0000314"/>
    <property type="project" value="FlyBase"/>
</dbReference>
<dbReference type="GO" id="GO:0040008">
    <property type="term" value="P:regulation of growth"/>
    <property type="evidence" value="ECO:0000315"/>
    <property type="project" value="FlyBase"/>
</dbReference>
<dbReference type="GO" id="GO:0006511">
    <property type="term" value="P:ubiquitin-dependent protein catabolic process"/>
    <property type="evidence" value="ECO:0000315"/>
    <property type="project" value="UniProtKB"/>
</dbReference>
<dbReference type="CDD" id="cd08382">
    <property type="entry name" value="C2_Smurf-like"/>
    <property type="match status" value="1"/>
</dbReference>
<dbReference type="CDD" id="cd00078">
    <property type="entry name" value="HECTc"/>
    <property type="match status" value="1"/>
</dbReference>
<dbReference type="CDD" id="cd00201">
    <property type="entry name" value="WW"/>
    <property type="match status" value="3"/>
</dbReference>
<dbReference type="FunFam" id="2.20.70.10:FF:000017">
    <property type="entry name" value="E3 ubiquitin-protein ligase"/>
    <property type="match status" value="1"/>
</dbReference>
<dbReference type="FunFam" id="2.60.40.150:FF:000024">
    <property type="entry name" value="E3 ubiquitin-protein ligase"/>
    <property type="match status" value="1"/>
</dbReference>
<dbReference type="FunFam" id="3.90.1750.10:FF:000079">
    <property type="entry name" value="E3 ubiquitin-protein ligase"/>
    <property type="match status" value="1"/>
</dbReference>
<dbReference type="FunFam" id="3.30.2160.10:FF:000001">
    <property type="entry name" value="E3 ubiquitin-protein ligase NEDD4-like"/>
    <property type="match status" value="1"/>
</dbReference>
<dbReference type="FunFam" id="3.30.2410.10:FF:000001">
    <property type="entry name" value="E3 ubiquitin-protein ligase NEDD4-like"/>
    <property type="match status" value="1"/>
</dbReference>
<dbReference type="FunFam" id="2.20.70.10:FF:000014">
    <property type="entry name" value="E3 ubiquitin-protein ligase SMURF1"/>
    <property type="match status" value="1"/>
</dbReference>
<dbReference type="FunFam" id="2.20.70.10:FF:000125">
    <property type="entry name" value="E3 ubiquitin-protein ligase Smurf1"/>
    <property type="match status" value="1"/>
</dbReference>
<dbReference type="Gene3D" id="2.20.70.10">
    <property type="match status" value="3"/>
</dbReference>
<dbReference type="Gene3D" id="2.60.40.150">
    <property type="entry name" value="C2 domain"/>
    <property type="match status" value="1"/>
</dbReference>
<dbReference type="Gene3D" id="3.30.2160.10">
    <property type="entry name" value="Hect, E3 ligase catalytic domain"/>
    <property type="match status" value="1"/>
</dbReference>
<dbReference type="Gene3D" id="3.30.2410.10">
    <property type="entry name" value="Hect, E3 ligase catalytic domain"/>
    <property type="match status" value="1"/>
</dbReference>
<dbReference type="Gene3D" id="3.90.1750.10">
    <property type="entry name" value="Hect, E3 ligase catalytic domains"/>
    <property type="match status" value="1"/>
</dbReference>
<dbReference type="InterPro" id="IPR000008">
    <property type="entry name" value="C2_dom"/>
</dbReference>
<dbReference type="InterPro" id="IPR035892">
    <property type="entry name" value="C2_domain_sf"/>
</dbReference>
<dbReference type="InterPro" id="IPR050409">
    <property type="entry name" value="E3_ubiq-protein_ligase"/>
</dbReference>
<dbReference type="InterPro" id="IPR000569">
    <property type="entry name" value="HECT_dom"/>
</dbReference>
<dbReference type="InterPro" id="IPR035983">
    <property type="entry name" value="Hect_E3_ubiquitin_ligase"/>
</dbReference>
<dbReference type="InterPro" id="IPR001202">
    <property type="entry name" value="WW_dom"/>
</dbReference>
<dbReference type="InterPro" id="IPR036020">
    <property type="entry name" value="WW_dom_sf"/>
</dbReference>
<dbReference type="PANTHER" id="PTHR11254:SF395">
    <property type="entry name" value="E3 UBIQUITIN-PROTEIN LIGASE SMURF1"/>
    <property type="match status" value="1"/>
</dbReference>
<dbReference type="PANTHER" id="PTHR11254">
    <property type="entry name" value="HECT DOMAIN UBIQUITIN-PROTEIN LIGASE"/>
    <property type="match status" value="1"/>
</dbReference>
<dbReference type="Pfam" id="PF00168">
    <property type="entry name" value="C2"/>
    <property type="match status" value="1"/>
</dbReference>
<dbReference type="Pfam" id="PF00632">
    <property type="entry name" value="HECT"/>
    <property type="match status" value="1"/>
</dbReference>
<dbReference type="Pfam" id="PF00397">
    <property type="entry name" value="WW"/>
    <property type="match status" value="3"/>
</dbReference>
<dbReference type="SMART" id="SM00239">
    <property type="entry name" value="C2"/>
    <property type="match status" value="1"/>
</dbReference>
<dbReference type="SMART" id="SM00119">
    <property type="entry name" value="HECTc"/>
    <property type="match status" value="1"/>
</dbReference>
<dbReference type="SMART" id="SM00456">
    <property type="entry name" value="WW"/>
    <property type="match status" value="3"/>
</dbReference>
<dbReference type="SUPFAM" id="SSF49562">
    <property type="entry name" value="C2 domain (Calcium/lipid-binding domain, CaLB)"/>
    <property type="match status" value="1"/>
</dbReference>
<dbReference type="SUPFAM" id="SSF56204">
    <property type="entry name" value="Hect, E3 ligase catalytic domain"/>
    <property type="match status" value="1"/>
</dbReference>
<dbReference type="SUPFAM" id="SSF51045">
    <property type="entry name" value="WW domain"/>
    <property type="match status" value="3"/>
</dbReference>
<dbReference type="PROSITE" id="PS50004">
    <property type="entry name" value="C2"/>
    <property type="match status" value="1"/>
</dbReference>
<dbReference type="PROSITE" id="PS50237">
    <property type="entry name" value="HECT"/>
    <property type="match status" value="1"/>
</dbReference>
<dbReference type="PROSITE" id="PS01159">
    <property type="entry name" value="WW_DOMAIN_1"/>
    <property type="match status" value="2"/>
</dbReference>
<dbReference type="PROSITE" id="PS50020">
    <property type="entry name" value="WW_DOMAIN_2"/>
    <property type="match status" value="3"/>
</dbReference>
<reference key="1">
    <citation type="journal article" date="2001" name="Dev. Cell">
        <title>The DSmurf ubiquitin-protein ligase restricts BMP signaling spatially and temporally during Drosophila embryogenesis.</title>
        <authorList>
            <person name="Podos S.D."/>
            <person name="Hanson K.K."/>
            <person name="Wang Y.-C."/>
            <person name="Ferguson E.L."/>
        </authorList>
    </citation>
    <scope>NUCLEOTIDE SEQUENCE [MRNA]</scope>
    <scope>FUNCTION</scope>
    <scope>INTERACTION WITH MAD</scope>
    <scope>DEVELOPMENTAL STAGE</scope>
    <scope>DISRUPTION PHENOTYPE</scope>
</reference>
<reference key="2">
    <citation type="journal article" date="2003" name="J. Biol. Chem.">
        <title>DSmurf selectively degrades decapentaplegic-activated MAD, and its overexpression disrupts imaginal disc development.</title>
        <authorList>
            <person name="Liang Y.-Y."/>
            <person name="Lin X."/>
            <person name="Liang M."/>
            <person name="Brunicardi F.C."/>
            <person name="ten Dijke P."/>
            <person name="Chen Z."/>
            <person name="Choi K.-W."/>
            <person name="Feng X.-H."/>
        </authorList>
    </citation>
    <scope>NUCLEOTIDE SEQUENCE [MRNA]</scope>
    <scope>FUNCTION</scope>
    <scope>INTERACTION WITH MAD</scope>
    <scope>MUTAGENESIS OF TRP-541; PRO-544 AND CYS-1029</scope>
</reference>
<reference key="3">
    <citation type="submission" date="1999-12" db="EMBL/GenBank/DDBJ databases">
        <title>Molecular cloning of a type E3 Ubiquitin ligase.</title>
        <authorList>
            <person name="Laurencon A."/>
            <person name="Hawley S."/>
        </authorList>
    </citation>
    <scope>NUCLEOTIDE SEQUENCE [MRNA]</scope>
</reference>
<reference key="4">
    <citation type="journal article" date="2000" name="Science">
        <title>The genome sequence of Drosophila melanogaster.</title>
        <authorList>
            <person name="Adams M.D."/>
            <person name="Celniker S.E."/>
            <person name="Holt R.A."/>
            <person name="Evans C.A."/>
            <person name="Gocayne J.D."/>
            <person name="Amanatides P.G."/>
            <person name="Scherer S.E."/>
            <person name="Li P.W."/>
            <person name="Hoskins R.A."/>
            <person name="Galle R.F."/>
            <person name="George R.A."/>
            <person name="Lewis S.E."/>
            <person name="Richards S."/>
            <person name="Ashburner M."/>
            <person name="Henderson S.N."/>
            <person name="Sutton G.G."/>
            <person name="Wortman J.R."/>
            <person name="Yandell M.D."/>
            <person name="Zhang Q."/>
            <person name="Chen L.X."/>
            <person name="Brandon R.C."/>
            <person name="Rogers Y.-H.C."/>
            <person name="Blazej R.G."/>
            <person name="Champe M."/>
            <person name="Pfeiffer B.D."/>
            <person name="Wan K.H."/>
            <person name="Doyle C."/>
            <person name="Baxter E.G."/>
            <person name="Helt G."/>
            <person name="Nelson C.R."/>
            <person name="Miklos G.L.G."/>
            <person name="Abril J.F."/>
            <person name="Agbayani A."/>
            <person name="An H.-J."/>
            <person name="Andrews-Pfannkoch C."/>
            <person name="Baldwin D."/>
            <person name="Ballew R.M."/>
            <person name="Basu A."/>
            <person name="Baxendale J."/>
            <person name="Bayraktaroglu L."/>
            <person name="Beasley E.M."/>
            <person name="Beeson K.Y."/>
            <person name="Benos P.V."/>
            <person name="Berman B.P."/>
            <person name="Bhandari D."/>
            <person name="Bolshakov S."/>
            <person name="Borkova D."/>
            <person name="Botchan M.R."/>
            <person name="Bouck J."/>
            <person name="Brokstein P."/>
            <person name="Brottier P."/>
            <person name="Burtis K.C."/>
            <person name="Busam D.A."/>
            <person name="Butler H."/>
            <person name="Cadieu E."/>
            <person name="Center A."/>
            <person name="Chandra I."/>
            <person name="Cherry J.M."/>
            <person name="Cawley S."/>
            <person name="Dahlke C."/>
            <person name="Davenport L.B."/>
            <person name="Davies P."/>
            <person name="de Pablos B."/>
            <person name="Delcher A."/>
            <person name="Deng Z."/>
            <person name="Mays A.D."/>
            <person name="Dew I."/>
            <person name="Dietz S.M."/>
            <person name="Dodson K."/>
            <person name="Doup L.E."/>
            <person name="Downes M."/>
            <person name="Dugan-Rocha S."/>
            <person name="Dunkov B.C."/>
            <person name="Dunn P."/>
            <person name="Durbin K.J."/>
            <person name="Evangelista C.C."/>
            <person name="Ferraz C."/>
            <person name="Ferriera S."/>
            <person name="Fleischmann W."/>
            <person name="Fosler C."/>
            <person name="Gabrielian A.E."/>
            <person name="Garg N.S."/>
            <person name="Gelbart W.M."/>
            <person name="Glasser K."/>
            <person name="Glodek A."/>
            <person name="Gong F."/>
            <person name="Gorrell J.H."/>
            <person name="Gu Z."/>
            <person name="Guan P."/>
            <person name="Harris M."/>
            <person name="Harris N.L."/>
            <person name="Harvey D.A."/>
            <person name="Heiman T.J."/>
            <person name="Hernandez J.R."/>
            <person name="Houck J."/>
            <person name="Hostin D."/>
            <person name="Houston K.A."/>
            <person name="Howland T.J."/>
            <person name="Wei M.-H."/>
            <person name="Ibegwam C."/>
            <person name="Jalali M."/>
            <person name="Kalush F."/>
            <person name="Karpen G.H."/>
            <person name="Ke Z."/>
            <person name="Kennison J.A."/>
            <person name="Ketchum K.A."/>
            <person name="Kimmel B.E."/>
            <person name="Kodira C.D."/>
            <person name="Kraft C.L."/>
            <person name="Kravitz S."/>
            <person name="Kulp D."/>
            <person name="Lai Z."/>
            <person name="Lasko P."/>
            <person name="Lei Y."/>
            <person name="Levitsky A.A."/>
            <person name="Li J.H."/>
            <person name="Li Z."/>
            <person name="Liang Y."/>
            <person name="Lin X."/>
            <person name="Liu X."/>
            <person name="Mattei B."/>
            <person name="McIntosh T.C."/>
            <person name="McLeod M.P."/>
            <person name="McPherson D."/>
            <person name="Merkulov G."/>
            <person name="Milshina N.V."/>
            <person name="Mobarry C."/>
            <person name="Morris J."/>
            <person name="Moshrefi A."/>
            <person name="Mount S.M."/>
            <person name="Moy M."/>
            <person name="Murphy B."/>
            <person name="Murphy L."/>
            <person name="Muzny D.M."/>
            <person name="Nelson D.L."/>
            <person name="Nelson D.R."/>
            <person name="Nelson K.A."/>
            <person name="Nixon K."/>
            <person name="Nusskern D.R."/>
            <person name="Pacleb J.M."/>
            <person name="Palazzolo M."/>
            <person name="Pittman G.S."/>
            <person name="Pan S."/>
            <person name="Pollard J."/>
            <person name="Puri V."/>
            <person name="Reese M.G."/>
            <person name="Reinert K."/>
            <person name="Remington K."/>
            <person name="Saunders R.D.C."/>
            <person name="Scheeler F."/>
            <person name="Shen H."/>
            <person name="Shue B.C."/>
            <person name="Siden-Kiamos I."/>
            <person name="Simpson M."/>
            <person name="Skupski M.P."/>
            <person name="Smith T.J."/>
            <person name="Spier E."/>
            <person name="Spradling A.C."/>
            <person name="Stapleton M."/>
            <person name="Strong R."/>
            <person name="Sun E."/>
            <person name="Svirskas R."/>
            <person name="Tector C."/>
            <person name="Turner R."/>
            <person name="Venter E."/>
            <person name="Wang A.H."/>
            <person name="Wang X."/>
            <person name="Wang Z.-Y."/>
            <person name="Wassarman D.A."/>
            <person name="Weinstock G.M."/>
            <person name="Weissenbach J."/>
            <person name="Williams S.M."/>
            <person name="Woodage T."/>
            <person name="Worley K.C."/>
            <person name="Wu D."/>
            <person name="Yang S."/>
            <person name="Yao Q.A."/>
            <person name="Ye J."/>
            <person name="Yeh R.-F."/>
            <person name="Zaveri J.S."/>
            <person name="Zhan M."/>
            <person name="Zhang G."/>
            <person name="Zhao Q."/>
            <person name="Zheng L."/>
            <person name="Zheng X.H."/>
            <person name="Zhong F.N."/>
            <person name="Zhong W."/>
            <person name="Zhou X."/>
            <person name="Zhu S.C."/>
            <person name="Zhu X."/>
            <person name="Smith H.O."/>
            <person name="Gibbs R.A."/>
            <person name="Myers E.W."/>
            <person name="Rubin G.M."/>
            <person name="Venter J.C."/>
        </authorList>
    </citation>
    <scope>NUCLEOTIDE SEQUENCE [LARGE SCALE GENOMIC DNA]</scope>
    <source>
        <strain>Berkeley</strain>
    </source>
</reference>
<reference key="5">
    <citation type="journal article" date="2002" name="Genome Biol.">
        <title>Annotation of the Drosophila melanogaster euchromatic genome: a systematic review.</title>
        <authorList>
            <person name="Misra S."/>
            <person name="Crosby M.A."/>
            <person name="Mungall C.J."/>
            <person name="Matthews B.B."/>
            <person name="Campbell K.S."/>
            <person name="Hradecky P."/>
            <person name="Huang Y."/>
            <person name="Kaminker J.S."/>
            <person name="Millburn G.H."/>
            <person name="Prochnik S.E."/>
            <person name="Smith C.D."/>
            <person name="Tupy J.L."/>
            <person name="Whitfield E.J."/>
            <person name="Bayraktaroglu L."/>
            <person name="Berman B.P."/>
            <person name="Bettencourt B.R."/>
            <person name="Celniker S.E."/>
            <person name="de Grey A.D.N.J."/>
            <person name="Drysdale R.A."/>
            <person name="Harris N.L."/>
            <person name="Richter J."/>
            <person name="Russo S."/>
            <person name="Schroeder A.J."/>
            <person name="Shu S.Q."/>
            <person name="Stapleton M."/>
            <person name="Yamada C."/>
            <person name="Ashburner M."/>
            <person name="Gelbart W.M."/>
            <person name="Rubin G.M."/>
            <person name="Lewis S.E."/>
        </authorList>
    </citation>
    <scope>GENOME REANNOTATION</scope>
    <source>
        <strain>Berkeley</strain>
    </source>
</reference>
<reference key="6">
    <citation type="submission" date="2005-03" db="EMBL/GenBank/DDBJ databases">
        <authorList>
            <person name="Stapleton M."/>
            <person name="Carlson J.W."/>
            <person name="Chavez C."/>
            <person name="Frise E."/>
            <person name="George R.A."/>
            <person name="Pacleb J.M."/>
            <person name="Park S."/>
            <person name="Wan K.H."/>
            <person name="Yu C."/>
            <person name="Rubin G.M."/>
            <person name="Celniker S.E."/>
        </authorList>
    </citation>
    <scope>NUCLEOTIDE SEQUENCE [LARGE SCALE MRNA]</scope>
    <source>
        <strain>Berkeley</strain>
        <tissue>Embryo</tissue>
    </source>
</reference>
<reference key="7">
    <citation type="journal article" date="2008" name="J. Proteome Res.">
        <title>Phosphoproteome analysis of Drosophila melanogaster embryos.</title>
        <authorList>
            <person name="Zhai B."/>
            <person name="Villen J."/>
            <person name="Beausoleil S.A."/>
            <person name="Mintseris J."/>
            <person name="Gygi S.P."/>
        </authorList>
    </citation>
    <scope>PHOSPHORYLATION [LARGE SCALE ANALYSIS] AT SER-262; THR-412 AND SER-416</scope>
    <scope>IDENTIFICATION BY MASS SPECTROMETRY</scope>
    <source>
        <tissue>Embryo</tissue>
    </source>
</reference>
<name>SMUF1_DROME</name>
<evidence type="ECO:0000250" key="1">
    <source>
        <dbReference type="UniProtKB" id="Q9HCE7"/>
    </source>
</evidence>
<evidence type="ECO:0000255" key="2">
    <source>
        <dbReference type="PROSITE-ProRule" id="PRU00041"/>
    </source>
</evidence>
<evidence type="ECO:0000255" key="3">
    <source>
        <dbReference type="PROSITE-ProRule" id="PRU00104"/>
    </source>
</evidence>
<evidence type="ECO:0000255" key="4">
    <source>
        <dbReference type="PROSITE-ProRule" id="PRU00224"/>
    </source>
</evidence>
<evidence type="ECO:0000256" key="5">
    <source>
        <dbReference type="SAM" id="MobiDB-lite"/>
    </source>
</evidence>
<evidence type="ECO:0000269" key="6">
    <source>
    </source>
</evidence>
<evidence type="ECO:0000269" key="7">
    <source>
    </source>
</evidence>
<evidence type="ECO:0000269" key="8">
    <source>
    </source>
</evidence>
<evidence type="ECO:0000303" key="9">
    <source>
    </source>
</evidence>
<evidence type="ECO:0000312" key="10">
    <source>
        <dbReference type="FlyBase" id="FBgn0029006"/>
    </source>
</evidence>